<feature type="chain" id="PRO_1000051587" description="Glucose-1-phosphate adenylyltransferase">
    <location>
        <begin position="1"/>
        <end position="431"/>
    </location>
</feature>
<feature type="binding site" evidence="1">
    <location>
        <position position="39"/>
    </location>
    <ligand>
        <name>beta-D-fructose 1,6-bisphosphate</name>
        <dbReference type="ChEBI" id="CHEBI:32966"/>
    </ligand>
</feature>
<feature type="binding site" evidence="1">
    <location>
        <position position="40"/>
    </location>
    <ligand>
        <name>AMP</name>
        <dbReference type="ChEBI" id="CHEBI:456215"/>
    </ligand>
</feature>
<feature type="binding site" evidence="1">
    <location>
        <position position="46"/>
    </location>
    <ligand>
        <name>AMP</name>
        <dbReference type="ChEBI" id="CHEBI:456215"/>
    </ligand>
</feature>
<feature type="binding site" evidence="1">
    <location>
        <position position="52"/>
    </location>
    <ligand>
        <name>AMP</name>
        <dbReference type="ChEBI" id="CHEBI:456215"/>
    </ligand>
</feature>
<feature type="binding site" evidence="1">
    <location>
        <position position="114"/>
    </location>
    <ligand>
        <name>alpha-D-glucose 1-phosphate</name>
        <dbReference type="ChEBI" id="CHEBI:58601"/>
    </ligand>
</feature>
<feature type="binding site" evidence="1">
    <location>
        <position position="130"/>
    </location>
    <ligand>
        <name>AMP</name>
        <dbReference type="ChEBI" id="CHEBI:456215"/>
    </ligand>
</feature>
<feature type="binding site" evidence="1">
    <location>
        <position position="179"/>
    </location>
    <ligand>
        <name>alpha-D-glucose 1-phosphate</name>
        <dbReference type="ChEBI" id="CHEBI:58601"/>
    </ligand>
</feature>
<feature type="binding site" evidence="1">
    <location>
        <begin position="194"/>
        <end position="195"/>
    </location>
    <ligand>
        <name>alpha-D-glucose 1-phosphate</name>
        <dbReference type="ChEBI" id="CHEBI:58601"/>
    </ligand>
</feature>
<feature type="binding site" evidence="1">
    <location>
        <position position="212"/>
    </location>
    <ligand>
        <name>alpha-D-glucose 1-phosphate</name>
        <dbReference type="ChEBI" id="CHEBI:58601"/>
    </ligand>
</feature>
<feature type="binding site" evidence="1">
    <location>
        <position position="370"/>
    </location>
    <ligand>
        <name>AMP</name>
        <dbReference type="ChEBI" id="CHEBI:456215"/>
    </ligand>
</feature>
<feature type="binding site" evidence="1">
    <location>
        <position position="386"/>
    </location>
    <ligand>
        <name>AMP</name>
        <dbReference type="ChEBI" id="CHEBI:456215"/>
    </ligand>
</feature>
<feature type="binding site" evidence="1">
    <location>
        <begin position="419"/>
        <end position="423"/>
    </location>
    <ligand>
        <name>beta-D-fructose 1,6-bisphosphate</name>
        <dbReference type="ChEBI" id="CHEBI:32966"/>
    </ligand>
</feature>
<feature type="binding site" evidence="1">
    <location>
        <begin position="429"/>
        <end position="431"/>
    </location>
    <ligand>
        <name>beta-D-fructose 1,6-bisphosphate</name>
        <dbReference type="ChEBI" id="CHEBI:32966"/>
    </ligand>
</feature>
<feature type="site" description="Could play a key role in the communication between the regulatory and the substrate sites" evidence="1">
    <location>
        <position position="74"/>
    </location>
</feature>
<feature type="site" description="Could play a key role in the communication between the regulatory and the substrate sites" evidence="1">
    <location>
        <position position="113"/>
    </location>
</feature>
<name>GLGC_SHIF8</name>
<protein>
    <recommendedName>
        <fullName evidence="1">Glucose-1-phosphate adenylyltransferase</fullName>
        <ecNumber evidence="1">2.7.7.27</ecNumber>
    </recommendedName>
    <alternativeName>
        <fullName evidence="1">ADP-glucose pyrophosphorylase</fullName>
        <shortName evidence="1">ADPGlc PPase</shortName>
    </alternativeName>
    <alternativeName>
        <fullName evidence="1">ADP-glucose synthase</fullName>
    </alternativeName>
</protein>
<comment type="function">
    <text evidence="1">Involved in the biosynthesis of ADP-glucose, a building block required for the elongation reactions to produce glycogen. Catalyzes the reaction between ATP and alpha-D-glucose 1-phosphate (G1P) to produce pyrophosphate and ADP-Glc.</text>
</comment>
<comment type="catalytic activity">
    <reaction evidence="1">
        <text>alpha-D-glucose 1-phosphate + ATP + H(+) = ADP-alpha-D-glucose + diphosphate</text>
        <dbReference type="Rhea" id="RHEA:12120"/>
        <dbReference type="ChEBI" id="CHEBI:15378"/>
        <dbReference type="ChEBI" id="CHEBI:30616"/>
        <dbReference type="ChEBI" id="CHEBI:33019"/>
        <dbReference type="ChEBI" id="CHEBI:57498"/>
        <dbReference type="ChEBI" id="CHEBI:58601"/>
        <dbReference type="EC" id="2.7.7.27"/>
    </reaction>
</comment>
<comment type="activity regulation">
    <text evidence="1">Allosterically activated by fructose-1,6-bisphosphate (F16BP) and inhibited by AMP.</text>
</comment>
<comment type="pathway">
    <text evidence="1">Glycan biosynthesis; glycogen biosynthesis.</text>
</comment>
<comment type="subunit">
    <text evidence="1">Homotetramer.</text>
</comment>
<comment type="similarity">
    <text evidence="1">Belongs to the bacterial/plant glucose-1-phosphate adenylyltransferase family.</text>
</comment>
<gene>
    <name evidence="1" type="primary">glgC</name>
    <name type="ordered locus">SFV_3439</name>
</gene>
<proteinExistence type="inferred from homology"/>
<accession>Q0SZN4</accession>
<organism>
    <name type="scientific">Shigella flexneri serotype 5b (strain 8401)</name>
    <dbReference type="NCBI Taxonomy" id="373384"/>
    <lineage>
        <taxon>Bacteria</taxon>
        <taxon>Pseudomonadati</taxon>
        <taxon>Pseudomonadota</taxon>
        <taxon>Gammaproteobacteria</taxon>
        <taxon>Enterobacterales</taxon>
        <taxon>Enterobacteriaceae</taxon>
        <taxon>Shigella</taxon>
    </lineage>
</organism>
<evidence type="ECO:0000255" key="1">
    <source>
        <dbReference type="HAMAP-Rule" id="MF_00624"/>
    </source>
</evidence>
<dbReference type="EC" id="2.7.7.27" evidence="1"/>
<dbReference type="EMBL" id="CP000266">
    <property type="protein sequence ID" value="ABF05481.1"/>
    <property type="molecule type" value="Genomic_DNA"/>
</dbReference>
<dbReference type="RefSeq" id="WP_000253975.1">
    <property type="nucleotide sequence ID" value="NC_008258.1"/>
</dbReference>
<dbReference type="SMR" id="Q0SZN4"/>
<dbReference type="GeneID" id="93778559"/>
<dbReference type="KEGG" id="sfv:SFV_3439"/>
<dbReference type="HOGENOM" id="CLU_029499_14_1_6"/>
<dbReference type="UniPathway" id="UPA00164"/>
<dbReference type="Proteomes" id="UP000000659">
    <property type="component" value="Chromosome"/>
</dbReference>
<dbReference type="GO" id="GO:0005524">
    <property type="term" value="F:ATP binding"/>
    <property type="evidence" value="ECO:0007669"/>
    <property type="project" value="UniProtKB-KW"/>
</dbReference>
<dbReference type="GO" id="GO:0008878">
    <property type="term" value="F:glucose-1-phosphate adenylyltransferase activity"/>
    <property type="evidence" value="ECO:0007669"/>
    <property type="project" value="UniProtKB-UniRule"/>
</dbReference>
<dbReference type="GO" id="GO:0005978">
    <property type="term" value="P:glycogen biosynthetic process"/>
    <property type="evidence" value="ECO:0007669"/>
    <property type="project" value="UniProtKB-UniRule"/>
</dbReference>
<dbReference type="CDD" id="cd02508">
    <property type="entry name" value="ADP_Glucose_PP"/>
    <property type="match status" value="1"/>
</dbReference>
<dbReference type="CDD" id="cd04651">
    <property type="entry name" value="LbH_G1P_AT_C"/>
    <property type="match status" value="1"/>
</dbReference>
<dbReference type="FunFam" id="2.160.10.10:FF:000006">
    <property type="entry name" value="Glucose-1-phosphate adenylyltransferase"/>
    <property type="match status" value="1"/>
</dbReference>
<dbReference type="FunFam" id="3.90.550.10:FF:000014">
    <property type="entry name" value="Glucose-1-phosphate adenylyltransferase"/>
    <property type="match status" value="1"/>
</dbReference>
<dbReference type="Gene3D" id="2.160.10.10">
    <property type="entry name" value="Hexapeptide repeat proteins"/>
    <property type="match status" value="1"/>
</dbReference>
<dbReference type="Gene3D" id="3.90.550.10">
    <property type="entry name" value="Spore Coat Polysaccharide Biosynthesis Protein SpsA, Chain A"/>
    <property type="match status" value="1"/>
</dbReference>
<dbReference type="HAMAP" id="MF_00624">
    <property type="entry name" value="GlgC"/>
    <property type="match status" value="1"/>
</dbReference>
<dbReference type="InterPro" id="IPR011831">
    <property type="entry name" value="ADP-Glc_PPase"/>
</dbReference>
<dbReference type="InterPro" id="IPR005836">
    <property type="entry name" value="ADP_Glu_pyroP_CS"/>
</dbReference>
<dbReference type="InterPro" id="IPR023049">
    <property type="entry name" value="GlgC_bac"/>
</dbReference>
<dbReference type="InterPro" id="IPR056818">
    <property type="entry name" value="GlmU/GlgC-like_hexapep"/>
</dbReference>
<dbReference type="InterPro" id="IPR005835">
    <property type="entry name" value="NTP_transferase_dom"/>
</dbReference>
<dbReference type="InterPro" id="IPR029044">
    <property type="entry name" value="Nucleotide-diphossugar_trans"/>
</dbReference>
<dbReference type="InterPro" id="IPR011004">
    <property type="entry name" value="Trimer_LpxA-like_sf"/>
</dbReference>
<dbReference type="NCBIfam" id="TIGR02091">
    <property type="entry name" value="glgC"/>
    <property type="match status" value="1"/>
</dbReference>
<dbReference type="NCBIfam" id="NF001947">
    <property type="entry name" value="PRK00725.1"/>
    <property type="match status" value="1"/>
</dbReference>
<dbReference type="NCBIfam" id="NF002023">
    <property type="entry name" value="PRK00844.1"/>
    <property type="match status" value="1"/>
</dbReference>
<dbReference type="PANTHER" id="PTHR43523:SF2">
    <property type="entry name" value="GLUCOSE-1-PHOSPHATE ADENYLYLTRANSFERASE"/>
    <property type="match status" value="1"/>
</dbReference>
<dbReference type="PANTHER" id="PTHR43523">
    <property type="entry name" value="GLUCOSE-1-PHOSPHATE ADENYLYLTRANSFERASE-RELATED"/>
    <property type="match status" value="1"/>
</dbReference>
<dbReference type="Pfam" id="PF24894">
    <property type="entry name" value="Hexapep_GlmU"/>
    <property type="match status" value="1"/>
</dbReference>
<dbReference type="Pfam" id="PF00483">
    <property type="entry name" value="NTP_transferase"/>
    <property type="match status" value="1"/>
</dbReference>
<dbReference type="SUPFAM" id="SSF53448">
    <property type="entry name" value="Nucleotide-diphospho-sugar transferases"/>
    <property type="match status" value="1"/>
</dbReference>
<dbReference type="SUPFAM" id="SSF51161">
    <property type="entry name" value="Trimeric LpxA-like enzymes"/>
    <property type="match status" value="1"/>
</dbReference>
<dbReference type="PROSITE" id="PS00808">
    <property type="entry name" value="ADP_GLC_PYROPHOSPH_1"/>
    <property type="match status" value="1"/>
</dbReference>
<dbReference type="PROSITE" id="PS00809">
    <property type="entry name" value="ADP_GLC_PYROPHOSPH_2"/>
    <property type="match status" value="1"/>
</dbReference>
<dbReference type="PROSITE" id="PS00810">
    <property type="entry name" value="ADP_GLC_PYROPHOSPH_3"/>
    <property type="match status" value="1"/>
</dbReference>
<sequence>MVSLEKNDHLMLARQLPLKSVALILAGGRGTRLKDLTNKRAKPAVHFGGKFRIIDFALSNCINSGIRRMGVITQYQSHTLVQHIQRGWSFFNEEMNEFVDLLPAQQRMKGENWYRGTADAVTQNLDIIRRYKAEYVVILAGDHIYKQDYSRMLIDHVEKGARCTVACMPVPIEEASAFGVMAVDENDKIIEFVEKPANPPSMPNDPSKSLASMGIYVFDADYLYELLEEDDRDENSSHDFGKDLIPKITEAGLAYAHPFPLSCVQSDPDAEPYWRDVGTLEAYWKANLDLASVVPELDMYDRNWPIRTYNESLPPAKFVQDRSGSHGMTLNSLVSGGCVISGSVVVQSVLFSRVRVNSFCNIDSAVLLPEVWVGRSCRLRRCVIDRACVIPEGMVIGENAEEDARRFYRSEEGIVLVTREMLRKLGHKQER</sequence>
<reference key="1">
    <citation type="journal article" date="2006" name="BMC Genomics">
        <title>Complete genome sequence of Shigella flexneri 5b and comparison with Shigella flexneri 2a.</title>
        <authorList>
            <person name="Nie H."/>
            <person name="Yang F."/>
            <person name="Zhang X."/>
            <person name="Yang J."/>
            <person name="Chen L."/>
            <person name="Wang J."/>
            <person name="Xiong Z."/>
            <person name="Peng J."/>
            <person name="Sun L."/>
            <person name="Dong J."/>
            <person name="Xue Y."/>
            <person name="Xu X."/>
            <person name="Chen S."/>
            <person name="Yao Z."/>
            <person name="Shen Y."/>
            <person name="Jin Q."/>
        </authorList>
    </citation>
    <scope>NUCLEOTIDE SEQUENCE [LARGE SCALE GENOMIC DNA]</scope>
    <source>
        <strain>8401</strain>
    </source>
</reference>
<keyword id="KW-0021">Allosteric enzyme</keyword>
<keyword id="KW-0067">ATP-binding</keyword>
<keyword id="KW-0119">Carbohydrate metabolism</keyword>
<keyword id="KW-0320">Glycogen biosynthesis</keyword>
<keyword id="KW-0321">Glycogen metabolism</keyword>
<keyword id="KW-0547">Nucleotide-binding</keyword>
<keyword id="KW-0548">Nucleotidyltransferase</keyword>
<keyword id="KW-0808">Transferase</keyword>